<proteinExistence type="evidence at protein level"/>
<accession>P46783</accession>
<accession>B2R4E3</accession>
<accession>Q5TZC0</accession>
<name>RS10_HUMAN</name>
<feature type="chain" id="PRO_0000116360" description="Small ribosomal subunit protein eS10">
    <location>
        <begin position="1"/>
        <end position="165"/>
    </location>
</feature>
<feature type="region of interest" description="Disordered" evidence="2">
    <location>
        <begin position="92"/>
        <end position="165"/>
    </location>
</feature>
<feature type="compositionally biased region" description="Basic and acidic residues" evidence="2">
    <location>
        <begin position="97"/>
        <end position="128"/>
    </location>
</feature>
<feature type="compositionally biased region" description="Gly residues" evidence="2">
    <location>
        <begin position="154"/>
        <end position="165"/>
    </location>
</feature>
<feature type="modified residue" description="Phosphotyrosine" evidence="1">
    <location>
        <position position="12"/>
    </location>
</feature>
<feature type="modified residue" description="Phosphoserine" evidence="1">
    <location>
        <position position="146"/>
    </location>
</feature>
<feature type="modified residue" description="Omega-N-methylarginine" evidence="1">
    <location>
        <position position="153"/>
    </location>
</feature>
<feature type="modified residue" description="Symmetric dimethylarginine" evidence="4">
    <location>
        <position position="158"/>
    </location>
</feature>
<feature type="modified residue" description="Symmetric dimethylarginine" evidence="4">
    <location>
        <position position="160"/>
    </location>
</feature>
<feature type="cross-link" description="Glycyl lysine isopeptide (Lys-Gly) (interchain with G-Cter in ubiquitin)" evidence="6 7 8 10 11">
    <location>
        <position position="138"/>
    </location>
</feature>
<feature type="cross-link" description="Glycyl lysine isopeptide (Lys-Gly) (interchain with G-Cter in ubiquitin)" evidence="6 7 8 10 11">
    <location>
        <position position="139"/>
    </location>
</feature>
<feature type="mutagenesis site" description="Abolishes monoubiquitination by ZNF598, leading to enhanced readthrough on the poly(A)-stall sequences." evidence="6 7 8 10 11">
    <original>KK</original>
    <variation>RR</variation>
    <location>
        <begin position="138"/>
        <end position="139"/>
    </location>
</feature>
<feature type="mutagenesis site" description="Weakly methylated. Complete loss of methylation; inefficient assembly into ribosomes; instability; increased degradation by the proteasomal pathway; decreased interaction with NPM1; absence of localization in the granular component (GC) region of the nucleolus; when associated with K-160." evidence="4">
    <original>R</original>
    <variation>K</variation>
    <location>
        <position position="158"/>
    </location>
</feature>
<feature type="mutagenesis site" description="Weakly methylated. Complete loss of methylation; inefficient assembly into ribosomes; instability; increased degradation by the proteasomal pathway; decreased interaction with NPM1; absence of localization in the granular component (GC) region of the nucleolus; when associated with K-158." evidence="4">
    <original>R</original>
    <variation>K</variation>
    <location>
        <position position="160"/>
    </location>
</feature>
<feature type="helix" evidence="15">
    <location>
        <begin position="5"/>
        <end position="17"/>
    </location>
</feature>
<feature type="strand" evidence="15">
    <location>
        <begin position="18"/>
        <end position="25"/>
    </location>
</feature>
<feature type="helix" evidence="15">
    <location>
        <begin position="33"/>
        <end position="35"/>
    </location>
</feature>
<feature type="turn" evidence="15">
    <location>
        <begin position="36"/>
        <end position="39"/>
    </location>
</feature>
<feature type="helix" evidence="15">
    <location>
        <begin position="42"/>
        <end position="54"/>
    </location>
</feature>
<feature type="strand" evidence="15">
    <location>
        <begin position="57"/>
        <end position="63"/>
    </location>
</feature>
<feature type="strand" evidence="15">
    <location>
        <begin position="66"/>
        <end position="71"/>
    </location>
</feature>
<feature type="helix" evidence="15">
    <location>
        <begin position="73"/>
        <end position="83"/>
    </location>
</feature>
<feature type="helix" evidence="15">
    <location>
        <begin position="92"/>
        <end position="94"/>
    </location>
</feature>
<sequence>MLMPKKNRIAIYELLFKEGVMVAKKDVHMPKHPELADKNVPNLHVMKAMQSLKSRGYVKEQFAWRHFYWYLTNEGIQYLRDYLHLPPEIVPATLRRSRPETGRPRPKGLEGERPARLTRGEADRDTYRRSAVPPGADKKAEAGAGSATEFQFRGGFGRGRGQPPQ</sequence>
<reference key="1">
    <citation type="journal article" date="1995" name="Biochim. Biophys. Acta">
        <title>Cloning, sequencing and expression of the L5, L21, L27a, L28, S5, S9, S10 and S29 human ribosomal protein mRNAs.</title>
        <authorList>
            <person name="Frigerio J.-M."/>
            <person name="Dagorn J.-C."/>
            <person name="Iovanna J.L."/>
        </authorList>
    </citation>
    <scope>NUCLEOTIDE SEQUENCE [MRNA]</scope>
    <source>
        <tissue>Colon</tissue>
    </source>
</reference>
<reference key="2">
    <citation type="journal article" date="2004" name="Nat. Genet.">
        <title>Complete sequencing and characterization of 21,243 full-length human cDNAs.</title>
        <authorList>
            <person name="Ota T."/>
            <person name="Suzuki Y."/>
            <person name="Nishikawa T."/>
            <person name="Otsuki T."/>
            <person name="Sugiyama T."/>
            <person name="Irie R."/>
            <person name="Wakamatsu A."/>
            <person name="Hayashi K."/>
            <person name="Sato H."/>
            <person name="Nagai K."/>
            <person name="Kimura K."/>
            <person name="Makita H."/>
            <person name="Sekine M."/>
            <person name="Obayashi M."/>
            <person name="Nishi T."/>
            <person name="Shibahara T."/>
            <person name="Tanaka T."/>
            <person name="Ishii S."/>
            <person name="Yamamoto J."/>
            <person name="Saito K."/>
            <person name="Kawai Y."/>
            <person name="Isono Y."/>
            <person name="Nakamura Y."/>
            <person name="Nagahari K."/>
            <person name="Murakami K."/>
            <person name="Yasuda T."/>
            <person name="Iwayanagi T."/>
            <person name="Wagatsuma M."/>
            <person name="Shiratori A."/>
            <person name="Sudo H."/>
            <person name="Hosoiri T."/>
            <person name="Kaku Y."/>
            <person name="Kodaira H."/>
            <person name="Kondo H."/>
            <person name="Sugawara M."/>
            <person name="Takahashi M."/>
            <person name="Kanda K."/>
            <person name="Yokoi T."/>
            <person name="Furuya T."/>
            <person name="Kikkawa E."/>
            <person name="Omura Y."/>
            <person name="Abe K."/>
            <person name="Kamihara K."/>
            <person name="Katsuta N."/>
            <person name="Sato K."/>
            <person name="Tanikawa M."/>
            <person name="Yamazaki M."/>
            <person name="Ninomiya K."/>
            <person name="Ishibashi T."/>
            <person name="Yamashita H."/>
            <person name="Murakawa K."/>
            <person name="Fujimori K."/>
            <person name="Tanai H."/>
            <person name="Kimata M."/>
            <person name="Watanabe M."/>
            <person name="Hiraoka S."/>
            <person name="Chiba Y."/>
            <person name="Ishida S."/>
            <person name="Ono Y."/>
            <person name="Takiguchi S."/>
            <person name="Watanabe S."/>
            <person name="Yosida M."/>
            <person name="Hotuta T."/>
            <person name="Kusano J."/>
            <person name="Kanehori K."/>
            <person name="Takahashi-Fujii A."/>
            <person name="Hara H."/>
            <person name="Tanase T.-O."/>
            <person name="Nomura Y."/>
            <person name="Togiya S."/>
            <person name="Komai F."/>
            <person name="Hara R."/>
            <person name="Takeuchi K."/>
            <person name="Arita M."/>
            <person name="Imose N."/>
            <person name="Musashino K."/>
            <person name="Yuuki H."/>
            <person name="Oshima A."/>
            <person name="Sasaki N."/>
            <person name="Aotsuka S."/>
            <person name="Yoshikawa Y."/>
            <person name="Matsunawa H."/>
            <person name="Ichihara T."/>
            <person name="Shiohata N."/>
            <person name="Sano S."/>
            <person name="Moriya S."/>
            <person name="Momiyama H."/>
            <person name="Satoh N."/>
            <person name="Takami S."/>
            <person name="Terashima Y."/>
            <person name="Suzuki O."/>
            <person name="Nakagawa S."/>
            <person name="Senoh A."/>
            <person name="Mizoguchi H."/>
            <person name="Goto Y."/>
            <person name="Shimizu F."/>
            <person name="Wakebe H."/>
            <person name="Hishigaki H."/>
            <person name="Watanabe T."/>
            <person name="Sugiyama A."/>
            <person name="Takemoto M."/>
            <person name="Kawakami B."/>
            <person name="Yamazaki M."/>
            <person name="Watanabe K."/>
            <person name="Kumagai A."/>
            <person name="Itakura S."/>
            <person name="Fukuzumi Y."/>
            <person name="Fujimori Y."/>
            <person name="Komiyama M."/>
            <person name="Tashiro H."/>
            <person name="Tanigami A."/>
            <person name="Fujiwara T."/>
            <person name="Ono T."/>
            <person name="Yamada K."/>
            <person name="Fujii Y."/>
            <person name="Ozaki K."/>
            <person name="Hirao M."/>
            <person name="Ohmori Y."/>
            <person name="Kawabata A."/>
            <person name="Hikiji T."/>
            <person name="Kobatake N."/>
            <person name="Inagaki H."/>
            <person name="Ikema Y."/>
            <person name="Okamoto S."/>
            <person name="Okitani R."/>
            <person name="Kawakami T."/>
            <person name="Noguchi S."/>
            <person name="Itoh T."/>
            <person name="Shigeta K."/>
            <person name="Senba T."/>
            <person name="Matsumura K."/>
            <person name="Nakajima Y."/>
            <person name="Mizuno T."/>
            <person name="Morinaga M."/>
            <person name="Sasaki M."/>
            <person name="Togashi T."/>
            <person name="Oyama M."/>
            <person name="Hata H."/>
            <person name="Watanabe M."/>
            <person name="Komatsu T."/>
            <person name="Mizushima-Sugano J."/>
            <person name="Satoh T."/>
            <person name="Shirai Y."/>
            <person name="Takahashi Y."/>
            <person name="Nakagawa K."/>
            <person name="Okumura K."/>
            <person name="Nagase T."/>
            <person name="Nomura N."/>
            <person name="Kikuchi H."/>
            <person name="Masuho Y."/>
            <person name="Yamashita R."/>
            <person name="Nakai K."/>
            <person name="Yada T."/>
            <person name="Nakamura Y."/>
            <person name="Ohara O."/>
            <person name="Isogai T."/>
            <person name="Sugano S."/>
        </authorList>
    </citation>
    <scope>NUCLEOTIDE SEQUENCE [LARGE SCALE MRNA]</scope>
    <source>
        <tissue>Testis</tissue>
    </source>
</reference>
<reference key="3">
    <citation type="journal article" date="2003" name="Nature">
        <title>The DNA sequence and analysis of human chromosome 6.</title>
        <authorList>
            <person name="Mungall A.J."/>
            <person name="Palmer S.A."/>
            <person name="Sims S.K."/>
            <person name="Edwards C.A."/>
            <person name="Ashurst J.L."/>
            <person name="Wilming L."/>
            <person name="Jones M.C."/>
            <person name="Horton R."/>
            <person name="Hunt S.E."/>
            <person name="Scott C.E."/>
            <person name="Gilbert J.G.R."/>
            <person name="Clamp M.E."/>
            <person name="Bethel G."/>
            <person name="Milne S."/>
            <person name="Ainscough R."/>
            <person name="Almeida J.P."/>
            <person name="Ambrose K.D."/>
            <person name="Andrews T.D."/>
            <person name="Ashwell R.I.S."/>
            <person name="Babbage A.K."/>
            <person name="Bagguley C.L."/>
            <person name="Bailey J."/>
            <person name="Banerjee R."/>
            <person name="Barker D.J."/>
            <person name="Barlow K.F."/>
            <person name="Bates K."/>
            <person name="Beare D.M."/>
            <person name="Beasley H."/>
            <person name="Beasley O."/>
            <person name="Bird C.P."/>
            <person name="Blakey S.E."/>
            <person name="Bray-Allen S."/>
            <person name="Brook J."/>
            <person name="Brown A.J."/>
            <person name="Brown J.Y."/>
            <person name="Burford D.C."/>
            <person name="Burrill W."/>
            <person name="Burton J."/>
            <person name="Carder C."/>
            <person name="Carter N.P."/>
            <person name="Chapman J.C."/>
            <person name="Clark S.Y."/>
            <person name="Clark G."/>
            <person name="Clee C.M."/>
            <person name="Clegg S."/>
            <person name="Cobley V."/>
            <person name="Collier R.E."/>
            <person name="Collins J.E."/>
            <person name="Colman L.K."/>
            <person name="Corby N.R."/>
            <person name="Coville G.J."/>
            <person name="Culley K.M."/>
            <person name="Dhami P."/>
            <person name="Davies J."/>
            <person name="Dunn M."/>
            <person name="Earthrowl M.E."/>
            <person name="Ellington A.E."/>
            <person name="Evans K.A."/>
            <person name="Faulkner L."/>
            <person name="Francis M.D."/>
            <person name="Frankish A."/>
            <person name="Frankland J."/>
            <person name="French L."/>
            <person name="Garner P."/>
            <person name="Garnett J."/>
            <person name="Ghori M.J."/>
            <person name="Gilby L.M."/>
            <person name="Gillson C.J."/>
            <person name="Glithero R.J."/>
            <person name="Grafham D.V."/>
            <person name="Grant M."/>
            <person name="Gribble S."/>
            <person name="Griffiths C."/>
            <person name="Griffiths M.N.D."/>
            <person name="Hall R."/>
            <person name="Halls K.S."/>
            <person name="Hammond S."/>
            <person name="Harley J.L."/>
            <person name="Hart E.A."/>
            <person name="Heath P.D."/>
            <person name="Heathcott R."/>
            <person name="Holmes S.J."/>
            <person name="Howden P.J."/>
            <person name="Howe K.L."/>
            <person name="Howell G.R."/>
            <person name="Huckle E."/>
            <person name="Humphray S.J."/>
            <person name="Humphries M.D."/>
            <person name="Hunt A.R."/>
            <person name="Johnson C.M."/>
            <person name="Joy A.A."/>
            <person name="Kay M."/>
            <person name="Keenan S.J."/>
            <person name="Kimberley A.M."/>
            <person name="King A."/>
            <person name="Laird G.K."/>
            <person name="Langford C."/>
            <person name="Lawlor S."/>
            <person name="Leongamornlert D.A."/>
            <person name="Leversha M."/>
            <person name="Lloyd C.R."/>
            <person name="Lloyd D.M."/>
            <person name="Loveland J.E."/>
            <person name="Lovell J."/>
            <person name="Martin S."/>
            <person name="Mashreghi-Mohammadi M."/>
            <person name="Maslen G.L."/>
            <person name="Matthews L."/>
            <person name="McCann O.T."/>
            <person name="McLaren S.J."/>
            <person name="McLay K."/>
            <person name="McMurray A."/>
            <person name="Moore M.J.F."/>
            <person name="Mullikin J.C."/>
            <person name="Niblett D."/>
            <person name="Nickerson T."/>
            <person name="Novik K.L."/>
            <person name="Oliver K."/>
            <person name="Overton-Larty E.K."/>
            <person name="Parker A."/>
            <person name="Patel R."/>
            <person name="Pearce A.V."/>
            <person name="Peck A.I."/>
            <person name="Phillimore B.J.C.T."/>
            <person name="Phillips S."/>
            <person name="Plumb R.W."/>
            <person name="Porter K.M."/>
            <person name="Ramsey Y."/>
            <person name="Ranby S.A."/>
            <person name="Rice C.M."/>
            <person name="Ross M.T."/>
            <person name="Searle S.M."/>
            <person name="Sehra H.K."/>
            <person name="Sheridan E."/>
            <person name="Skuce C.D."/>
            <person name="Smith S."/>
            <person name="Smith M."/>
            <person name="Spraggon L."/>
            <person name="Squares S.L."/>
            <person name="Steward C.A."/>
            <person name="Sycamore N."/>
            <person name="Tamlyn-Hall G."/>
            <person name="Tester J."/>
            <person name="Theaker A.J."/>
            <person name="Thomas D.W."/>
            <person name="Thorpe A."/>
            <person name="Tracey A."/>
            <person name="Tromans A."/>
            <person name="Tubby B."/>
            <person name="Wall M."/>
            <person name="Wallis J.M."/>
            <person name="West A.P."/>
            <person name="White S.S."/>
            <person name="Whitehead S.L."/>
            <person name="Whittaker H."/>
            <person name="Wild A."/>
            <person name="Willey D.J."/>
            <person name="Wilmer T.E."/>
            <person name="Wood J.M."/>
            <person name="Wray P.W."/>
            <person name="Wyatt J.C."/>
            <person name="Young L."/>
            <person name="Younger R.M."/>
            <person name="Bentley D.R."/>
            <person name="Coulson A."/>
            <person name="Durbin R.M."/>
            <person name="Hubbard T."/>
            <person name="Sulston J.E."/>
            <person name="Dunham I."/>
            <person name="Rogers J."/>
            <person name="Beck S."/>
        </authorList>
    </citation>
    <scope>NUCLEOTIDE SEQUENCE [LARGE SCALE GENOMIC DNA]</scope>
</reference>
<reference key="4">
    <citation type="submission" date="2005-07" db="EMBL/GenBank/DDBJ databases">
        <authorList>
            <person name="Mural R.J."/>
            <person name="Istrail S."/>
            <person name="Sutton G.G."/>
            <person name="Florea L."/>
            <person name="Halpern A.L."/>
            <person name="Mobarry C.M."/>
            <person name="Lippert R."/>
            <person name="Walenz B."/>
            <person name="Shatkay H."/>
            <person name="Dew I."/>
            <person name="Miller J.R."/>
            <person name="Flanigan M.J."/>
            <person name="Edwards N.J."/>
            <person name="Bolanos R."/>
            <person name="Fasulo D."/>
            <person name="Halldorsson B.V."/>
            <person name="Hannenhalli S."/>
            <person name="Turner R."/>
            <person name="Yooseph S."/>
            <person name="Lu F."/>
            <person name="Nusskern D.R."/>
            <person name="Shue B.C."/>
            <person name="Zheng X.H."/>
            <person name="Zhong F."/>
            <person name="Delcher A.L."/>
            <person name="Huson D.H."/>
            <person name="Kravitz S.A."/>
            <person name="Mouchard L."/>
            <person name="Reinert K."/>
            <person name="Remington K.A."/>
            <person name="Clark A.G."/>
            <person name="Waterman M.S."/>
            <person name="Eichler E.E."/>
            <person name="Adams M.D."/>
            <person name="Hunkapiller M.W."/>
            <person name="Myers E.W."/>
            <person name="Venter J.C."/>
        </authorList>
    </citation>
    <scope>NUCLEOTIDE SEQUENCE [LARGE SCALE GENOMIC DNA]</scope>
</reference>
<reference key="5">
    <citation type="journal article" date="2004" name="Genome Res.">
        <title>The status, quality, and expansion of the NIH full-length cDNA project: the Mammalian Gene Collection (MGC).</title>
        <authorList>
            <consortium name="The MGC Project Team"/>
        </authorList>
    </citation>
    <scope>NUCLEOTIDE SEQUENCE [LARGE SCALE MRNA]</scope>
    <source>
        <tissue>Lymph</tissue>
        <tissue>Placenta</tissue>
        <tissue>Skin</tissue>
    </source>
</reference>
<reference key="6">
    <citation type="journal article" date="1996" name="Eur. J. Biochem.">
        <title>Characterization of the human small-ribosomal-subunit proteins by N-terminal and internal sequencing, and mass spectrometry.</title>
        <authorList>
            <person name="Vladimirov S.N."/>
            <person name="Ivanov A.V."/>
            <person name="Karpova G.G."/>
            <person name="Musolyamov A.K."/>
            <person name="Egorov T.A."/>
            <person name="Thiede B."/>
            <person name="Wittmann-Liebold B."/>
            <person name="Otto A."/>
        </authorList>
    </citation>
    <scope>PROTEIN SEQUENCE OF 1-15</scope>
    <source>
        <tissue>Placenta</tissue>
    </source>
</reference>
<reference key="7">
    <citation type="journal article" date="1998" name="Genome Res.">
        <title>A map of 75 human ribosomal protein genes.</title>
        <authorList>
            <person name="Kenmochi N."/>
            <person name="Kawaguchi T."/>
            <person name="Rozen S."/>
            <person name="Davis E."/>
            <person name="Goodman N."/>
            <person name="Hudson T.J."/>
            <person name="Tanaka T."/>
            <person name="Page D.C."/>
        </authorList>
    </citation>
    <scope>NUCLEOTIDE SEQUENCE [GENOMIC DNA] OF 8-85</scope>
</reference>
<reference key="8">
    <citation type="journal article" date="2010" name="J. Biol. Chem.">
        <title>Methylation of ribosomal protein S10 by protein-arginine methyltransferase 5 regulates ribosome biogenesis.</title>
        <authorList>
            <person name="Ren J."/>
            <person name="Wang Y."/>
            <person name="Liang Y."/>
            <person name="Zhang Y."/>
            <person name="Bao S."/>
            <person name="Xu Z."/>
        </authorList>
    </citation>
    <scope>SUBCELLULAR LOCATION</scope>
    <scope>METHYLATION AT ARG-158 AND ARG-160</scope>
    <scope>INTERACTION WITH PRMT5 AND NPM1</scope>
    <scope>MUTAGENESIS OF ARG-158 AND ARG-160</scope>
</reference>
<reference key="9">
    <citation type="journal article" date="2010" name="Am. J. Hum. Genet.">
        <title>Ribosomal protein genes RPS10 and RPS26 are commonly mutated in Diamond-Blackfan anemia.</title>
        <authorList>
            <person name="Doherty L."/>
            <person name="Sheen M.R."/>
            <person name="Vlachos A."/>
            <person name="Choesmel V."/>
            <person name="O'Donohue M.F."/>
            <person name="Clinton C."/>
            <person name="Schneider H.E."/>
            <person name="Sieff C.A."/>
            <person name="Newburger P.E."/>
            <person name="Ball S.E."/>
            <person name="Niewiadomska E."/>
            <person name="Matysiak M."/>
            <person name="Glader B."/>
            <person name="Arceci R.J."/>
            <person name="Farrar J.E."/>
            <person name="Atsidaftos E."/>
            <person name="Lipton J.M."/>
            <person name="Gleizes P.E."/>
            <person name="Gazda H.T."/>
        </authorList>
    </citation>
    <scope>INVOLVEMENT IN DBA9</scope>
</reference>
<reference key="10">
    <citation type="journal article" date="2010" name="Am. J. Hum. Genet.">
        <authorList>
            <person name="Doherty L."/>
            <person name="Sheen M.R."/>
            <person name="Vlachos A."/>
            <person name="Choesmel V."/>
            <person name="O'Donohue M.F."/>
            <person name="Clinton C."/>
            <person name="Schneider H.E."/>
            <person name="Sieff C.A."/>
            <person name="Newburger P.E."/>
            <person name="Ball S.E."/>
            <person name="Niewiadomska E."/>
            <person name="Matysiak M."/>
            <person name="Glader B."/>
            <person name="Arceci R.J."/>
            <person name="Farrar J.E."/>
            <person name="Atsidaftos E."/>
            <person name="Lipton J.M."/>
            <person name="Gleizes P.E."/>
            <person name="Gazda H.T."/>
        </authorList>
    </citation>
    <scope>ERRATUM OF PUBMED:20116044</scope>
</reference>
<reference key="11">
    <citation type="journal article" date="2014" name="Curr. Opin. Struct. Biol.">
        <title>A new system for naming ribosomal proteins.</title>
        <authorList>
            <person name="Ban N."/>
            <person name="Beckmann R."/>
            <person name="Cate J.H.D."/>
            <person name="Dinman J.D."/>
            <person name="Dragon F."/>
            <person name="Ellis S.R."/>
            <person name="Lafontaine D.L.J."/>
            <person name="Lindahl L."/>
            <person name="Liljas A."/>
            <person name="Lipton J.M."/>
            <person name="McAlear M.A."/>
            <person name="Moore P.B."/>
            <person name="Noller H.F."/>
            <person name="Ortega J."/>
            <person name="Panse V.G."/>
            <person name="Ramakrishnan V."/>
            <person name="Spahn C.M.T."/>
            <person name="Steitz T.A."/>
            <person name="Tchorzewski M."/>
            <person name="Tollervey D."/>
            <person name="Warren A.J."/>
            <person name="Williamson J.R."/>
            <person name="Wilson D."/>
            <person name="Yonath A."/>
            <person name="Yusupov M."/>
        </authorList>
    </citation>
    <scope>NOMENCLATURE</scope>
</reference>
<reference key="12">
    <citation type="journal article" date="2016" name="Mol. Cell">
        <title>Initiation of quality control during poly(A) translation requires site-specific ribosome ubiquitination.</title>
        <authorList>
            <person name="Juszkiewicz S."/>
            <person name="Hegde R.S."/>
        </authorList>
    </citation>
    <scope>UBIQUITINATION AT LYS-138 AND LYS-139</scope>
    <scope>MUTAGENESIS OF 138-LYS-LYS-139</scope>
</reference>
<reference key="13">
    <citation type="journal article" date="2017" name="Mol. Cell">
        <title>ZNF598 and RACK1 regulate mammalian ribosome-associated quality control function by mediating regulatory 40S ribosomal ubiquitylation.</title>
        <authorList>
            <person name="Sundaramoorthy E."/>
            <person name="Leonard M."/>
            <person name="Mak R."/>
            <person name="Liao J."/>
            <person name="Fulzele A."/>
            <person name="Bennett E.J."/>
        </authorList>
    </citation>
    <scope>UBIQUITINATION AT LYS-138 AND LYS-139</scope>
    <scope>MUTAGENESIS OF 138-LYS-LYS-139</scope>
</reference>
<reference key="14">
    <citation type="journal article" date="2017" name="Nat. Commun.">
        <title>The E3 ubiquitin ligase and RNA-binding protein ZNF598 orchestrates ribosome quality control of premature polyadenylated mRNAs.</title>
        <authorList>
            <person name="Garzia A."/>
            <person name="Jafarnejad S.M."/>
            <person name="Meyer C."/>
            <person name="Chapat C."/>
            <person name="Gogakos T."/>
            <person name="Morozov P."/>
            <person name="Amiri M."/>
            <person name="Shapiro M."/>
            <person name="Molina H."/>
            <person name="Tuschl T."/>
            <person name="Sonenberg N."/>
        </authorList>
    </citation>
    <scope>UBIQUITINATION AT LYS-138 AND LYS-139</scope>
    <scope>MUTAGENESIS OF 138-LYS-LYS-139</scope>
</reference>
<reference key="15">
    <citation type="journal article" date="2020" name="Elife">
        <title>Distinct regulatory ribosomal ubiquitylation events are reversible and hierarchically organized.</title>
        <authorList>
            <person name="Garshott D.M."/>
            <person name="Sundaramoorthy E."/>
            <person name="Leonard M."/>
            <person name="Bennett E.J."/>
        </authorList>
    </citation>
    <scope>UBIQUITINATION AT LYS-138 AND LYS-139</scope>
    <scope>DEUBIQUITINATION</scope>
    <scope>MUTAGENESIS OF 138-LYS-LYS-139</scope>
</reference>
<reference key="16">
    <citation type="journal article" date="2020" name="Mol. Cell">
        <title>The G3BP1-family-USP10 deubiquitinase complex rescues ubiquitinated 40S subunits of ribosomes stalled in translation from lysosomal degradation.</title>
        <authorList>
            <person name="Meyer C."/>
            <person name="Garzia A."/>
            <person name="Morozov P."/>
            <person name="Molina H."/>
            <person name="Tuschl T."/>
        </authorList>
    </citation>
    <scope>DEUBIQUITINATION BY USP10</scope>
</reference>
<reference key="17">
    <citation type="journal article" date="2022" name="Mol. Cell. Biol.">
        <title>Deubiquitinase OTUD1 resolves stalled translation on polyA and rare codon rich mRNAs.</title>
        <authorList>
            <person name="Snaurova R."/>
            <person name="Vdovin A."/>
            <person name="Durech M."/>
            <person name="Nezval J."/>
            <person name="Zihala D."/>
            <person name="Jelinek T."/>
            <person name="Hajek R."/>
            <person name="Simicek M."/>
        </authorList>
    </citation>
    <scope>DEUBIQUITINATION</scope>
</reference>
<reference key="18">
    <citation type="journal article" date="2022" name="Nat. Commun.">
        <title>A distinct mammalian disome collision interface harbors K63-linked polyubiquitination of uS10 to trigger hRQT-mediated subunit dissociation.</title>
        <authorList>
            <person name="Narita M."/>
            <person name="Denk T."/>
            <person name="Matsuo Y."/>
            <person name="Sugiyama T."/>
            <person name="Kikuguchi C."/>
            <person name="Ito S."/>
            <person name="Sato N."/>
            <person name="Suzuki T."/>
            <person name="Hashimoto S."/>
            <person name="Machova I."/>
            <person name="Tesina P."/>
            <person name="Beckmann R."/>
            <person name="Inada T."/>
        </authorList>
    </citation>
    <scope>UBIQUITINATION AT LYS-138 AND LYS-139</scope>
    <scope>MUTAGENESIS OF 138-LYS-LYS-139</scope>
</reference>
<reference key="19">
    <citation type="journal article" date="2013" name="Nature">
        <title>Structures of the human and Drosophila 80S ribosome.</title>
        <authorList>
            <person name="Anger A.M."/>
            <person name="Armache J.P."/>
            <person name="Berninghausen O."/>
            <person name="Habeck M."/>
            <person name="Subklewe M."/>
            <person name="Wilson D.N."/>
            <person name="Beckmann R."/>
        </authorList>
    </citation>
    <scope>STRUCTURE BY ELECTRON MICROSCOPY (5.0 ANGSTROMS) OF 80S RIBOSOME</scope>
    <scope>FUNCTION</scope>
    <scope>SUBUNIT</scope>
    <scope>SUBCELLULAR LOCATION</scope>
</reference>
<keyword id="KW-0002">3D-structure</keyword>
<keyword id="KW-0963">Cytoplasm</keyword>
<keyword id="KW-1024">Diamond-Blackfan anemia</keyword>
<keyword id="KW-0903">Direct protein sequencing</keyword>
<keyword id="KW-1017">Isopeptide bond</keyword>
<keyword id="KW-0488">Methylation</keyword>
<keyword id="KW-0539">Nucleus</keyword>
<keyword id="KW-0597">Phosphoprotein</keyword>
<keyword id="KW-1267">Proteomics identification</keyword>
<keyword id="KW-1185">Reference proteome</keyword>
<keyword id="KW-0687">Ribonucleoprotein</keyword>
<keyword id="KW-0689">Ribosomal protein</keyword>
<keyword id="KW-0832">Ubl conjugation</keyword>
<dbReference type="EMBL" id="U14972">
    <property type="protein sequence ID" value="AAA85660.1"/>
    <property type="molecule type" value="mRNA"/>
</dbReference>
<dbReference type="EMBL" id="AK311797">
    <property type="protein sequence ID" value="BAG34740.1"/>
    <property type="molecule type" value="mRNA"/>
</dbReference>
<dbReference type="EMBL" id="AL157372">
    <property type="status" value="NOT_ANNOTATED_CDS"/>
    <property type="molecule type" value="Genomic_DNA"/>
</dbReference>
<dbReference type="EMBL" id="CH471081">
    <property type="protein sequence ID" value="EAX03784.1"/>
    <property type="molecule type" value="Genomic_DNA"/>
</dbReference>
<dbReference type="EMBL" id="BC001032">
    <property type="protein sequence ID" value="AAH01032.1"/>
    <property type="molecule type" value="mRNA"/>
</dbReference>
<dbReference type="EMBL" id="BC001955">
    <property type="protein sequence ID" value="AAH01955.1"/>
    <property type="molecule type" value="mRNA"/>
</dbReference>
<dbReference type="EMBL" id="BC005012">
    <property type="protein sequence ID" value="AAH05012.1"/>
    <property type="molecule type" value="mRNA"/>
</dbReference>
<dbReference type="EMBL" id="BC070235">
    <property type="protein sequence ID" value="AAH70235.1"/>
    <property type="molecule type" value="mRNA"/>
</dbReference>
<dbReference type="EMBL" id="BC071946">
    <property type="protein sequence ID" value="AAH71946.1"/>
    <property type="molecule type" value="mRNA"/>
</dbReference>
<dbReference type="EMBL" id="BC073799">
    <property type="protein sequence ID" value="AAH73799.1"/>
    <property type="molecule type" value="mRNA"/>
</dbReference>
<dbReference type="EMBL" id="AB007151">
    <property type="protein sequence ID" value="BAA25817.1"/>
    <property type="molecule type" value="Genomic_DNA"/>
</dbReference>
<dbReference type="CCDS" id="CCDS4792.1"/>
<dbReference type="PIR" id="S55918">
    <property type="entry name" value="S55918"/>
</dbReference>
<dbReference type="RefSeq" id="NP_001005.1">
    <property type="nucleotide sequence ID" value="NM_001014.5"/>
</dbReference>
<dbReference type="RefSeq" id="NP_001190174.1">
    <property type="nucleotide sequence ID" value="NM_001203245.3"/>
</dbReference>
<dbReference type="RefSeq" id="NP_001191020.1">
    <property type="nucleotide sequence ID" value="NM_001204091.2"/>
</dbReference>
<dbReference type="PDB" id="4UG0">
    <property type="method" value="EM"/>
    <property type="chains" value="SK=1-165"/>
</dbReference>
<dbReference type="PDB" id="4V6X">
    <property type="method" value="EM"/>
    <property type="resolution" value="5.00 A"/>
    <property type="chains" value="AK=1-165"/>
</dbReference>
<dbReference type="PDB" id="5A2Q">
    <property type="method" value="EM"/>
    <property type="resolution" value="3.90 A"/>
    <property type="chains" value="K=1-165"/>
</dbReference>
<dbReference type="PDB" id="5AJ0">
    <property type="method" value="EM"/>
    <property type="resolution" value="3.50 A"/>
    <property type="chains" value="BK=1-165"/>
</dbReference>
<dbReference type="PDB" id="5FLX">
    <property type="method" value="EM"/>
    <property type="resolution" value="3.90 A"/>
    <property type="chains" value="K=1-165"/>
</dbReference>
<dbReference type="PDB" id="5LKS">
    <property type="method" value="EM"/>
    <property type="resolution" value="3.60 A"/>
    <property type="chains" value="SK=1-165"/>
</dbReference>
<dbReference type="PDB" id="5OA3">
    <property type="method" value="EM"/>
    <property type="resolution" value="4.30 A"/>
    <property type="chains" value="K=1-165"/>
</dbReference>
<dbReference type="PDB" id="5T2C">
    <property type="method" value="EM"/>
    <property type="resolution" value="3.60 A"/>
    <property type="chains" value="Av=1-165"/>
</dbReference>
<dbReference type="PDB" id="5VYC">
    <property type="method" value="X-ray"/>
    <property type="resolution" value="6.00 A"/>
    <property type="chains" value="K1/K2/K3/K4/K5/K6=1-165"/>
</dbReference>
<dbReference type="PDB" id="6FEC">
    <property type="method" value="EM"/>
    <property type="resolution" value="6.30 A"/>
    <property type="chains" value="t=1-98"/>
</dbReference>
<dbReference type="PDB" id="6G51">
    <property type="method" value="EM"/>
    <property type="resolution" value="4.10 A"/>
    <property type="chains" value="K=1-165"/>
</dbReference>
<dbReference type="PDB" id="6G53">
    <property type="method" value="EM"/>
    <property type="resolution" value="4.50 A"/>
    <property type="chains" value="K=1-165"/>
</dbReference>
<dbReference type="PDB" id="6G5H">
    <property type="method" value="EM"/>
    <property type="resolution" value="3.60 A"/>
    <property type="chains" value="K=1-165"/>
</dbReference>
<dbReference type="PDB" id="6G5I">
    <property type="method" value="EM"/>
    <property type="resolution" value="3.50 A"/>
    <property type="chains" value="K=1-165"/>
</dbReference>
<dbReference type="PDB" id="6IP5">
    <property type="method" value="EM"/>
    <property type="resolution" value="3.90 A"/>
    <property type="chains" value="2u=1-165"/>
</dbReference>
<dbReference type="PDB" id="6IP6">
    <property type="method" value="EM"/>
    <property type="resolution" value="4.50 A"/>
    <property type="chains" value="2u=1-165"/>
</dbReference>
<dbReference type="PDB" id="6IP8">
    <property type="method" value="EM"/>
    <property type="resolution" value="3.90 A"/>
    <property type="chains" value="2u=1-165"/>
</dbReference>
<dbReference type="PDB" id="6OLE">
    <property type="method" value="EM"/>
    <property type="resolution" value="3.10 A"/>
    <property type="chains" value="SK=1-98"/>
</dbReference>
<dbReference type="PDB" id="6OLF">
    <property type="method" value="EM"/>
    <property type="resolution" value="3.90 A"/>
    <property type="chains" value="SK=1-98"/>
</dbReference>
<dbReference type="PDB" id="6OLG">
    <property type="method" value="EM"/>
    <property type="resolution" value="3.40 A"/>
    <property type="chains" value="BK=1-98"/>
</dbReference>
<dbReference type="PDB" id="6OLI">
    <property type="method" value="EM"/>
    <property type="resolution" value="3.50 A"/>
    <property type="chains" value="SK=1-98"/>
</dbReference>
<dbReference type="PDB" id="6OLZ">
    <property type="method" value="EM"/>
    <property type="resolution" value="3.90 A"/>
    <property type="chains" value="BK=1-98"/>
</dbReference>
<dbReference type="PDB" id="6OM0">
    <property type="method" value="EM"/>
    <property type="resolution" value="3.10 A"/>
    <property type="chains" value="SK=1-98"/>
</dbReference>
<dbReference type="PDB" id="6OM7">
    <property type="method" value="EM"/>
    <property type="resolution" value="3.70 A"/>
    <property type="chains" value="SK=1-98"/>
</dbReference>
<dbReference type="PDB" id="6QZP">
    <property type="method" value="EM"/>
    <property type="resolution" value="2.90 A"/>
    <property type="chains" value="SK=1-98"/>
</dbReference>
<dbReference type="PDB" id="6XA1">
    <property type="method" value="EM"/>
    <property type="resolution" value="2.80 A"/>
    <property type="chains" value="SK=1-95"/>
</dbReference>
<dbReference type="PDB" id="6Y0G">
    <property type="method" value="EM"/>
    <property type="resolution" value="3.20 A"/>
    <property type="chains" value="SK=1-165"/>
</dbReference>
<dbReference type="PDB" id="6Y2L">
    <property type="method" value="EM"/>
    <property type="resolution" value="3.00 A"/>
    <property type="chains" value="SK=1-165"/>
</dbReference>
<dbReference type="PDB" id="6Y57">
    <property type="method" value="EM"/>
    <property type="resolution" value="3.50 A"/>
    <property type="chains" value="SK=1-165"/>
</dbReference>
<dbReference type="PDB" id="6YBS">
    <property type="method" value="EM"/>
    <property type="resolution" value="3.10 A"/>
    <property type="chains" value="a=1-165"/>
</dbReference>
<dbReference type="PDB" id="6Z6L">
    <property type="method" value="EM"/>
    <property type="resolution" value="3.00 A"/>
    <property type="chains" value="SK=1-165"/>
</dbReference>
<dbReference type="PDB" id="6Z6M">
    <property type="method" value="EM"/>
    <property type="resolution" value="3.10 A"/>
    <property type="chains" value="SK=1-165"/>
</dbReference>
<dbReference type="PDB" id="6Z6N">
    <property type="method" value="EM"/>
    <property type="resolution" value="2.90 A"/>
    <property type="chains" value="SK=1-165"/>
</dbReference>
<dbReference type="PDB" id="6ZLW">
    <property type="method" value="EM"/>
    <property type="resolution" value="2.60 A"/>
    <property type="chains" value="M=1-165"/>
</dbReference>
<dbReference type="PDB" id="6ZM7">
    <property type="method" value="EM"/>
    <property type="resolution" value="2.70 A"/>
    <property type="chains" value="SK=1-165"/>
</dbReference>
<dbReference type="PDB" id="6ZME">
    <property type="method" value="EM"/>
    <property type="resolution" value="3.00 A"/>
    <property type="chains" value="SK=1-165"/>
</dbReference>
<dbReference type="PDB" id="6ZMI">
    <property type="method" value="EM"/>
    <property type="resolution" value="2.60 A"/>
    <property type="chains" value="SK=1-165"/>
</dbReference>
<dbReference type="PDB" id="6ZMO">
    <property type="method" value="EM"/>
    <property type="resolution" value="3.10 A"/>
    <property type="chains" value="SK=1-165"/>
</dbReference>
<dbReference type="PDB" id="6ZMT">
    <property type="method" value="EM"/>
    <property type="resolution" value="3.00 A"/>
    <property type="chains" value="M=1-165"/>
</dbReference>
<dbReference type="PDB" id="6ZMW">
    <property type="method" value="EM"/>
    <property type="resolution" value="3.70 A"/>
    <property type="chains" value="a=1-165"/>
</dbReference>
<dbReference type="PDB" id="6ZN5">
    <property type="method" value="EM"/>
    <property type="resolution" value="3.20 A"/>
    <property type="chains" value="M=3-97"/>
</dbReference>
<dbReference type="PDB" id="6ZOJ">
    <property type="method" value="EM"/>
    <property type="resolution" value="2.80 A"/>
    <property type="chains" value="K=1-165"/>
</dbReference>
<dbReference type="PDB" id="6ZOL">
    <property type="method" value="EM"/>
    <property type="resolution" value="2.80 A"/>
    <property type="chains" value="K=1-165"/>
</dbReference>
<dbReference type="PDB" id="6ZON">
    <property type="method" value="EM"/>
    <property type="resolution" value="3.00 A"/>
    <property type="chains" value="u=1-165"/>
</dbReference>
<dbReference type="PDB" id="6ZP4">
    <property type="method" value="EM"/>
    <property type="resolution" value="2.90 A"/>
    <property type="chains" value="u=1-165"/>
</dbReference>
<dbReference type="PDB" id="6ZUO">
    <property type="method" value="EM"/>
    <property type="resolution" value="3.10 A"/>
    <property type="chains" value="K=1-165"/>
</dbReference>
<dbReference type="PDB" id="6ZV6">
    <property type="method" value="EM"/>
    <property type="resolution" value="2.90 A"/>
    <property type="chains" value="K=1-165"/>
</dbReference>
<dbReference type="PDB" id="6ZVH">
    <property type="method" value="EM"/>
    <property type="resolution" value="2.90 A"/>
    <property type="chains" value="K=1-98"/>
</dbReference>
<dbReference type="PDB" id="6ZVJ">
    <property type="method" value="EM"/>
    <property type="resolution" value="3.80 A"/>
    <property type="chains" value="u=1-95"/>
</dbReference>
<dbReference type="PDB" id="6ZXD">
    <property type="method" value="EM"/>
    <property type="resolution" value="3.20 A"/>
    <property type="chains" value="K=1-165"/>
</dbReference>
<dbReference type="PDB" id="6ZXE">
    <property type="method" value="EM"/>
    <property type="resolution" value="3.00 A"/>
    <property type="chains" value="K=1-165"/>
</dbReference>
<dbReference type="PDB" id="6ZXF">
    <property type="method" value="EM"/>
    <property type="resolution" value="3.70 A"/>
    <property type="chains" value="K=1-165"/>
</dbReference>
<dbReference type="PDB" id="6ZXG">
    <property type="method" value="EM"/>
    <property type="resolution" value="2.60 A"/>
    <property type="chains" value="K=1-165"/>
</dbReference>
<dbReference type="PDB" id="6ZXH">
    <property type="method" value="EM"/>
    <property type="resolution" value="2.70 A"/>
    <property type="chains" value="K=1-165"/>
</dbReference>
<dbReference type="PDB" id="7A09">
    <property type="method" value="EM"/>
    <property type="resolution" value="3.50 A"/>
    <property type="chains" value="u=1-165"/>
</dbReference>
<dbReference type="PDB" id="7K5I">
    <property type="method" value="EM"/>
    <property type="resolution" value="2.90 A"/>
    <property type="chains" value="K=1-165"/>
</dbReference>
<dbReference type="PDB" id="7QP6">
    <property type="method" value="EM"/>
    <property type="resolution" value="4.70 A"/>
    <property type="chains" value="a=1-165"/>
</dbReference>
<dbReference type="PDB" id="7QP7">
    <property type="method" value="EM"/>
    <property type="resolution" value="3.70 A"/>
    <property type="chains" value="a=1-165"/>
</dbReference>
<dbReference type="PDB" id="7QVP">
    <property type="method" value="EM"/>
    <property type="resolution" value="3.00 A"/>
    <property type="chains" value="RK/SK=1-165"/>
</dbReference>
<dbReference type="PDB" id="7R4X">
    <property type="method" value="EM"/>
    <property type="resolution" value="2.15 A"/>
    <property type="chains" value="K=1-165"/>
</dbReference>
<dbReference type="PDB" id="7TQL">
    <property type="method" value="EM"/>
    <property type="resolution" value="3.40 A"/>
    <property type="chains" value="M=1-97"/>
</dbReference>
<dbReference type="PDB" id="7XNX">
    <property type="method" value="EM"/>
    <property type="resolution" value="2.70 A"/>
    <property type="chains" value="SK=1-165"/>
</dbReference>
<dbReference type="PDB" id="7XNY">
    <property type="method" value="EM"/>
    <property type="resolution" value="2.50 A"/>
    <property type="chains" value="SK=1-165"/>
</dbReference>
<dbReference type="PDB" id="8G5Y">
    <property type="method" value="EM"/>
    <property type="resolution" value="2.29 A"/>
    <property type="chains" value="SK=1-165"/>
</dbReference>
<dbReference type="PDB" id="8G60">
    <property type="method" value="EM"/>
    <property type="resolution" value="2.54 A"/>
    <property type="chains" value="SK=1-165"/>
</dbReference>
<dbReference type="PDB" id="8G61">
    <property type="method" value="EM"/>
    <property type="resolution" value="2.94 A"/>
    <property type="chains" value="SK=1-165"/>
</dbReference>
<dbReference type="PDB" id="8G6J">
    <property type="method" value="EM"/>
    <property type="resolution" value="2.80 A"/>
    <property type="chains" value="SK=1-165"/>
</dbReference>
<dbReference type="PDB" id="8GLP">
    <property type="method" value="EM"/>
    <property type="resolution" value="1.67 A"/>
    <property type="chains" value="SK=1-165"/>
</dbReference>
<dbReference type="PDB" id="8IFD">
    <property type="method" value="EM"/>
    <property type="resolution" value="2.59 A"/>
    <property type="chains" value="2u=1-165"/>
</dbReference>
<dbReference type="PDB" id="8IFE">
    <property type="method" value="EM"/>
    <property type="resolution" value="2.57 A"/>
    <property type="chains" value="2u=1-165"/>
</dbReference>
<dbReference type="PDB" id="8JDJ">
    <property type="method" value="EM"/>
    <property type="resolution" value="2.50 A"/>
    <property type="chains" value="7=1-165"/>
</dbReference>
<dbReference type="PDB" id="8JDK">
    <property type="method" value="EM"/>
    <property type="resolution" value="2.26 A"/>
    <property type="chains" value="7=1-165"/>
</dbReference>
<dbReference type="PDB" id="8JDL">
    <property type="method" value="EM"/>
    <property type="resolution" value="2.42 A"/>
    <property type="chains" value="7=1-165"/>
</dbReference>
<dbReference type="PDB" id="8JDM">
    <property type="method" value="EM"/>
    <property type="resolution" value="2.67 A"/>
    <property type="chains" value="7=1-165"/>
</dbReference>
<dbReference type="PDB" id="8K2C">
    <property type="method" value="EM"/>
    <property type="resolution" value="2.40 A"/>
    <property type="chains" value="SK=1-165"/>
</dbReference>
<dbReference type="PDB" id="8OZ0">
    <property type="method" value="EM"/>
    <property type="resolution" value="3.50 A"/>
    <property type="chains" value="i=1-165"/>
</dbReference>
<dbReference type="PDB" id="8PJ1">
    <property type="method" value="EM"/>
    <property type="resolution" value="3.40 A"/>
    <property type="chains" value="a=1-165"/>
</dbReference>
<dbReference type="PDB" id="8PJ2">
    <property type="method" value="EM"/>
    <property type="resolution" value="3.40 A"/>
    <property type="chains" value="a=1-165"/>
</dbReference>
<dbReference type="PDB" id="8PJ3">
    <property type="method" value="EM"/>
    <property type="resolution" value="3.70 A"/>
    <property type="chains" value="a=1-165"/>
</dbReference>
<dbReference type="PDB" id="8PJ4">
    <property type="method" value="EM"/>
    <property type="resolution" value="3.20 A"/>
    <property type="chains" value="a=1-165"/>
</dbReference>
<dbReference type="PDB" id="8PJ5">
    <property type="method" value="EM"/>
    <property type="resolution" value="2.90 A"/>
    <property type="chains" value="a=1-165"/>
</dbReference>
<dbReference type="PDB" id="8PJ6">
    <property type="method" value="EM"/>
    <property type="resolution" value="2.90 A"/>
    <property type="chains" value="a=1-165"/>
</dbReference>
<dbReference type="PDB" id="8PPK">
    <property type="method" value="EM"/>
    <property type="resolution" value="2.98 A"/>
    <property type="chains" value="K=1-165"/>
</dbReference>
<dbReference type="PDB" id="8PPL">
    <property type="method" value="EM"/>
    <property type="resolution" value="2.65 A"/>
    <property type="chains" value="AK=1-165"/>
</dbReference>
<dbReference type="PDB" id="8QOI">
    <property type="method" value="EM"/>
    <property type="resolution" value="1.90 A"/>
    <property type="chains" value="SK=1-165"/>
</dbReference>
<dbReference type="PDB" id="8T4S">
    <property type="method" value="EM"/>
    <property type="resolution" value="2.60 A"/>
    <property type="chains" value="K=1-165"/>
</dbReference>
<dbReference type="PDB" id="8UKB">
    <property type="method" value="EM"/>
    <property type="resolution" value="3.05 A"/>
    <property type="chains" value="SK=1-98"/>
</dbReference>
<dbReference type="PDB" id="8XP2">
    <property type="method" value="EM"/>
    <property type="resolution" value="3.20 A"/>
    <property type="chains" value="SK=1-165"/>
</dbReference>
<dbReference type="PDB" id="8XP3">
    <property type="method" value="EM"/>
    <property type="resolution" value="3.40 A"/>
    <property type="chains" value="SK=1-165"/>
</dbReference>
<dbReference type="PDB" id="8XSX">
    <property type="method" value="EM"/>
    <property type="resolution" value="2.40 A"/>
    <property type="chains" value="SK=1-165"/>
</dbReference>
<dbReference type="PDB" id="8XSY">
    <property type="method" value="EM"/>
    <property type="resolution" value="3.00 A"/>
    <property type="chains" value="SK=1-165"/>
</dbReference>
<dbReference type="PDB" id="8XSZ">
    <property type="method" value="EM"/>
    <property type="resolution" value="3.20 A"/>
    <property type="chains" value="SK=1-165"/>
</dbReference>
<dbReference type="PDB" id="8XXL">
    <property type="method" value="EM"/>
    <property type="resolution" value="2.90 A"/>
    <property type="chains" value="SK=1-165"/>
</dbReference>
<dbReference type="PDB" id="8XXM">
    <property type="method" value="EM"/>
    <property type="resolution" value="3.20 A"/>
    <property type="chains" value="SK=1-165"/>
</dbReference>
<dbReference type="PDB" id="8XXN">
    <property type="method" value="EM"/>
    <property type="resolution" value="3.60 A"/>
    <property type="chains" value="SK=1-165"/>
</dbReference>
<dbReference type="PDB" id="8Y0W">
    <property type="method" value="EM"/>
    <property type="resolution" value="3.40 A"/>
    <property type="chains" value="SK=1-165"/>
</dbReference>
<dbReference type="PDB" id="8Y0X">
    <property type="method" value="EM"/>
    <property type="resolution" value="3.30 A"/>
    <property type="chains" value="SK=1-165"/>
</dbReference>
<dbReference type="PDB" id="8YOO">
    <property type="method" value="EM"/>
    <property type="resolution" value="2.00 A"/>
    <property type="chains" value="SK=1-165"/>
</dbReference>
<dbReference type="PDB" id="8YOP">
    <property type="method" value="EM"/>
    <property type="resolution" value="2.20 A"/>
    <property type="chains" value="SK=1-165"/>
</dbReference>
<dbReference type="PDB" id="8ZDB">
    <property type="method" value="EM"/>
    <property type="resolution" value="3.60 A"/>
    <property type="chains" value="K=1-165"/>
</dbReference>
<dbReference type="PDB" id="8ZDC">
    <property type="method" value="EM"/>
    <property type="resolution" value="3.80 A"/>
    <property type="chains" value="K=1-165"/>
</dbReference>
<dbReference type="PDB" id="8ZDD">
    <property type="method" value="EM"/>
    <property type="resolution" value="3.70 A"/>
    <property type="chains" value="K=1-165"/>
</dbReference>
<dbReference type="PDB" id="9BKD">
    <property type="method" value="EM"/>
    <property type="resolution" value="2.60 A"/>
    <property type="chains" value="a=1-165"/>
</dbReference>
<dbReference type="PDB" id="9BLN">
    <property type="method" value="EM"/>
    <property type="resolution" value="3.90 A"/>
    <property type="chains" value="a=1-165"/>
</dbReference>
<dbReference type="PDB" id="9C3H">
    <property type="method" value="EM"/>
    <property type="resolution" value="2.00 A"/>
    <property type="chains" value="SM=1-165"/>
</dbReference>
<dbReference type="PDB" id="9G8M">
    <property type="method" value="EM"/>
    <property type="resolution" value="3.30 A"/>
    <property type="chains" value="SK=1-165"/>
</dbReference>
<dbReference type="PDB" id="9G8O">
    <property type="method" value="EM"/>
    <property type="resolution" value="3.40 A"/>
    <property type="chains" value="SK=1-165"/>
</dbReference>
<dbReference type="PDBsum" id="4UG0"/>
<dbReference type="PDBsum" id="4V6X"/>
<dbReference type="PDBsum" id="5A2Q"/>
<dbReference type="PDBsum" id="5AJ0"/>
<dbReference type="PDBsum" id="5FLX"/>
<dbReference type="PDBsum" id="5LKS"/>
<dbReference type="PDBsum" id="5OA3"/>
<dbReference type="PDBsum" id="5T2C"/>
<dbReference type="PDBsum" id="5VYC"/>
<dbReference type="PDBsum" id="6FEC"/>
<dbReference type="PDBsum" id="6G51"/>
<dbReference type="PDBsum" id="6G53"/>
<dbReference type="PDBsum" id="6G5H"/>
<dbReference type="PDBsum" id="6G5I"/>
<dbReference type="PDBsum" id="6IP5"/>
<dbReference type="PDBsum" id="6IP6"/>
<dbReference type="PDBsum" id="6IP8"/>
<dbReference type="PDBsum" id="6OLE"/>
<dbReference type="PDBsum" id="6OLF"/>
<dbReference type="PDBsum" id="6OLG"/>
<dbReference type="PDBsum" id="6OLI"/>
<dbReference type="PDBsum" id="6OLZ"/>
<dbReference type="PDBsum" id="6OM0"/>
<dbReference type="PDBsum" id="6OM7"/>
<dbReference type="PDBsum" id="6QZP"/>
<dbReference type="PDBsum" id="6XA1"/>
<dbReference type="PDBsum" id="6Y0G"/>
<dbReference type="PDBsum" id="6Y2L"/>
<dbReference type="PDBsum" id="6Y57"/>
<dbReference type="PDBsum" id="6YBS"/>
<dbReference type="PDBsum" id="6Z6L"/>
<dbReference type="PDBsum" id="6Z6M"/>
<dbReference type="PDBsum" id="6Z6N"/>
<dbReference type="PDBsum" id="6ZLW"/>
<dbReference type="PDBsum" id="6ZM7"/>
<dbReference type="PDBsum" id="6ZME"/>
<dbReference type="PDBsum" id="6ZMI"/>
<dbReference type="PDBsum" id="6ZMO"/>
<dbReference type="PDBsum" id="6ZMT"/>
<dbReference type="PDBsum" id="6ZMW"/>
<dbReference type="PDBsum" id="6ZN5"/>
<dbReference type="PDBsum" id="6ZOJ"/>
<dbReference type="PDBsum" id="6ZOL"/>
<dbReference type="PDBsum" id="6ZON"/>
<dbReference type="PDBsum" id="6ZP4"/>
<dbReference type="PDBsum" id="6ZUO"/>
<dbReference type="PDBsum" id="6ZV6"/>
<dbReference type="PDBsum" id="6ZVH"/>
<dbReference type="PDBsum" id="6ZVJ"/>
<dbReference type="PDBsum" id="6ZXD"/>
<dbReference type="PDBsum" id="6ZXE"/>
<dbReference type="PDBsum" id="6ZXF"/>
<dbReference type="PDBsum" id="6ZXG"/>
<dbReference type="PDBsum" id="6ZXH"/>
<dbReference type="PDBsum" id="7A09"/>
<dbReference type="PDBsum" id="7K5I"/>
<dbReference type="PDBsum" id="7QP6"/>
<dbReference type="PDBsum" id="7QP7"/>
<dbReference type="PDBsum" id="7QVP"/>
<dbReference type="PDBsum" id="7R4X"/>
<dbReference type="PDBsum" id="7TQL"/>
<dbReference type="PDBsum" id="7XNX"/>
<dbReference type="PDBsum" id="7XNY"/>
<dbReference type="PDBsum" id="8G5Y"/>
<dbReference type="PDBsum" id="8G60"/>
<dbReference type="PDBsum" id="8G61"/>
<dbReference type="PDBsum" id="8G6J"/>
<dbReference type="PDBsum" id="8GLP"/>
<dbReference type="PDBsum" id="8IFD"/>
<dbReference type="PDBsum" id="8IFE"/>
<dbReference type="PDBsum" id="8JDJ"/>
<dbReference type="PDBsum" id="8JDK"/>
<dbReference type="PDBsum" id="8JDL"/>
<dbReference type="PDBsum" id="8JDM"/>
<dbReference type="PDBsum" id="8K2C"/>
<dbReference type="PDBsum" id="8OZ0"/>
<dbReference type="PDBsum" id="8PJ1"/>
<dbReference type="PDBsum" id="8PJ2"/>
<dbReference type="PDBsum" id="8PJ3"/>
<dbReference type="PDBsum" id="8PJ4"/>
<dbReference type="PDBsum" id="8PJ5"/>
<dbReference type="PDBsum" id="8PJ6"/>
<dbReference type="PDBsum" id="8PPK"/>
<dbReference type="PDBsum" id="8PPL"/>
<dbReference type="PDBsum" id="8QOI"/>
<dbReference type="PDBsum" id="8T4S"/>
<dbReference type="PDBsum" id="8UKB"/>
<dbReference type="PDBsum" id="8XP2"/>
<dbReference type="PDBsum" id="8XP3"/>
<dbReference type="PDBsum" id="8XSX"/>
<dbReference type="PDBsum" id="8XSY"/>
<dbReference type="PDBsum" id="8XSZ"/>
<dbReference type="PDBsum" id="8XXL"/>
<dbReference type="PDBsum" id="8XXM"/>
<dbReference type="PDBsum" id="8XXN"/>
<dbReference type="PDBsum" id="8Y0W"/>
<dbReference type="PDBsum" id="8Y0X"/>
<dbReference type="PDBsum" id="8YOO"/>
<dbReference type="PDBsum" id="8YOP"/>
<dbReference type="PDBsum" id="8ZDB"/>
<dbReference type="PDBsum" id="8ZDC"/>
<dbReference type="PDBsum" id="8ZDD"/>
<dbReference type="PDBsum" id="9BKD"/>
<dbReference type="PDBsum" id="9BLN"/>
<dbReference type="PDBsum" id="9C3H"/>
<dbReference type="PDBsum" id="9G8M"/>
<dbReference type="PDBsum" id="9G8O"/>
<dbReference type="EMDB" id="EMD-10668"/>
<dbReference type="EMDB" id="EMD-10674"/>
<dbReference type="EMDB" id="EMD-10690"/>
<dbReference type="EMDB" id="EMD-10772"/>
<dbReference type="EMDB" id="EMD-11098"/>
<dbReference type="EMDB" id="EMD-11099"/>
<dbReference type="EMDB" id="EMD-11100"/>
<dbReference type="EMDB" id="EMD-11276"/>
<dbReference type="EMDB" id="EMD-11288"/>
<dbReference type="EMDB" id="EMD-11289"/>
<dbReference type="EMDB" id="EMD-11292"/>
<dbReference type="EMDB" id="EMD-11299"/>
<dbReference type="EMDB" id="EMD-11301"/>
<dbReference type="EMDB" id="EMD-11302"/>
<dbReference type="EMDB" id="EMD-11310"/>
<dbReference type="EMDB" id="EMD-11320"/>
<dbReference type="EMDB" id="EMD-11322"/>
<dbReference type="EMDB" id="EMD-11325"/>
<dbReference type="EMDB" id="EMD-11335"/>
<dbReference type="EMDB" id="EMD-11440"/>
<dbReference type="EMDB" id="EMD-11441"/>
<dbReference type="EMDB" id="EMD-11456"/>
<dbReference type="EMDB" id="EMD-11458"/>
<dbReference type="EMDB" id="EMD-11517"/>
<dbReference type="EMDB" id="EMD-11518"/>
<dbReference type="EMDB" id="EMD-11519"/>
<dbReference type="EMDB" id="EMD-11520"/>
<dbReference type="EMDB" id="EMD-11521"/>
<dbReference type="EMDB" id="EMD-11602"/>
<dbReference type="EMDB" id="EMD-14113"/>
<dbReference type="EMDB" id="EMD-14114"/>
<dbReference type="EMDB" id="EMD-14181"/>
<dbReference type="EMDB" id="EMD-14317"/>
<dbReference type="EMDB" id="EMD-17297"/>
<dbReference type="EMDB" id="EMD-17696"/>
<dbReference type="EMDB" id="EMD-17697"/>
<dbReference type="EMDB" id="EMD-17698"/>
<dbReference type="EMDB" id="EMD-17699"/>
<dbReference type="EMDB" id="EMD-17700"/>
<dbReference type="EMDB" id="EMD-17701"/>
<dbReference type="EMDB" id="EMD-17804"/>
<dbReference type="EMDB" id="EMD-17805"/>
<dbReference type="EMDB" id="EMD-18539"/>
<dbReference type="EMDB" id="EMD-22681"/>
<dbReference type="EMDB" id="EMD-29757"/>
<dbReference type="EMDB" id="EMD-29758"/>
<dbReference type="EMDB" id="EMD-29759"/>
<dbReference type="EMDB" id="EMD-29760"/>
<dbReference type="EMDB" id="EMD-29771"/>
<dbReference type="EMDB" id="EMD-33329"/>
<dbReference type="EMDB" id="EMD-33330"/>
<dbReference type="EMDB" id="EMD-35413"/>
<dbReference type="EMDB" id="EMD-35414"/>
<dbReference type="EMDB" id="EMD-36178"/>
<dbReference type="EMDB" id="EMD-36179"/>
<dbReference type="EMDB" id="EMD-36180"/>
<dbReference type="EMDB" id="EMD-36181"/>
<dbReference type="EMDB" id="EMD-36838"/>
<dbReference type="EMDB" id="EMD-3770"/>
<dbReference type="EMDB" id="EMD-38548"/>
<dbReference type="EMDB" id="EMD-38549"/>
<dbReference type="EMDB" id="EMD-38629"/>
<dbReference type="EMDB" id="EMD-38630"/>
<dbReference type="EMDB" id="EMD-38631"/>
<dbReference type="EMDB" id="EMD-38752"/>
<dbReference type="EMDB" id="EMD-38753"/>
<dbReference type="EMDB" id="EMD-38754"/>
<dbReference type="EMDB" id="EMD-3883"/>
<dbReference type="EMDB" id="EMD-39455"/>
<dbReference type="EMDB" id="EMD-39456"/>
<dbReference type="EMDB" id="EMD-39956"/>
<dbReference type="EMDB" id="EMD-39957"/>
<dbReference type="EMDB" id="EMD-39958"/>
<dbReference type="EMDB" id="EMD-40205"/>
<dbReference type="EMDB" id="EMD-4070"/>
<dbReference type="EMDB" id="EMD-41039"/>
<dbReference type="EMDB" id="EMD-42351"/>
<dbReference type="EMDB" id="EMD-4242"/>
<dbReference type="EMDB" id="EMD-4350"/>
<dbReference type="EMDB" id="EMD-4351"/>
<dbReference type="EMDB" id="EMD-4352"/>
<dbReference type="EMDB" id="EMD-4353"/>
<dbReference type="EMDB" id="EMD-44641"/>
<dbReference type="EMDB" id="EMD-44671"/>
<dbReference type="EMDB" id="EMD-45170"/>
<dbReference type="EMDB" id="EMD-51132"/>
<dbReference type="EMDB" id="EMD-51134"/>
<dbReference type="EMDB" id="EMD-9701"/>
<dbReference type="EMDB" id="EMD-9702"/>
<dbReference type="EMDB" id="EMD-9703"/>
<dbReference type="SMR" id="P46783"/>
<dbReference type="BioGRID" id="112118">
    <property type="interactions" value="595"/>
</dbReference>
<dbReference type="ComplexPortal" id="CPX-5223">
    <property type="entry name" value="40S cytosolic small ribosomal subunit"/>
</dbReference>
<dbReference type="CORUM" id="P46783"/>
<dbReference type="FunCoup" id="P46783">
    <property type="interactions" value="2157"/>
</dbReference>
<dbReference type="IntAct" id="P46783">
    <property type="interactions" value="318"/>
</dbReference>
<dbReference type="MINT" id="P46783"/>
<dbReference type="STRING" id="9606.ENSP00000481646"/>
<dbReference type="GlyGen" id="P46783">
    <property type="glycosylation" value="1 site, 1 O-linked glycan (1 site)"/>
</dbReference>
<dbReference type="iPTMnet" id="P46783"/>
<dbReference type="PhosphoSitePlus" id="P46783"/>
<dbReference type="SwissPalm" id="P46783"/>
<dbReference type="BioMuta" id="RPS10"/>
<dbReference type="DMDM" id="1173177"/>
<dbReference type="jPOST" id="P46783"/>
<dbReference type="MassIVE" id="P46783"/>
<dbReference type="PaxDb" id="9606-ENSP00000481646"/>
<dbReference type="PeptideAtlas" id="P46783"/>
<dbReference type="ProteomicsDB" id="55765"/>
<dbReference type="Pumba" id="P46783"/>
<dbReference type="TopDownProteomics" id="P46783"/>
<dbReference type="Antibodypedia" id="45705">
    <property type="antibodies" value="223 antibodies from 30 providers"/>
</dbReference>
<dbReference type="DNASU" id="6204"/>
<dbReference type="Ensembl" id="ENST00000464218.5">
    <property type="protein sequence ID" value="ENSP00000494440.1"/>
    <property type="gene ID" value="ENSG00000124614.17"/>
</dbReference>
<dbReference type="Ensembl" id="ENST00000467531.5">
    <property type="protein sequence ID" value="ENSP00000494190.1"/>
    <property type="gene ID" value="ENSG00000124614.17"/>
</dbReference>
<dbReference type="Ensembl" id="ENST00000621356.3">
    <property type="protein sequence ID" value="ENSP00000481646.1"/>
    <property type="gene ID" value="ENSG00000124614.17"/>
</dbReference>
<dbReference type="Ensembl" id="ENST00000648437.1">
    <property type="protein sequence ID" value="ENSP00000497917.1"/>
    <property type="gene ID" value="ENSG00000124614.17"/>
</dbReference>
<dbReference type="GeneID" id="6204"/>
<dbReference type="KEGG" id="hsa:6204"/>
<dbReference type="MANE-Select" id="ENST00000648437.1">
    <property type="protein sequence ID" value="ENSP00000497917.1"/>
    <property type="RefSeq nucleotide sequence ID" value="NM_001014.5"/>
    <property type="RefSeq protein sequence ID" value="NP_001005.1"/>
</dbReference>
<dbReference type="UCSC" id="uc003ojm.4">
    <property type="organism name" value="human"/>
</dbReference>
<dbReference type="AGR" id="HGNC:10383"/>
<dbReference type="CTD" id="6204"/>
<dbReference type="DisGeNET" id="6204"/>
<dbReference type="GeneCards" id="RPS10"/>
<dbReference type="GeneReviews" id="RPS10"/>
<dbReference type="HGNC" id="HGNC:10383">
    <property type="gene designation" value="RPS10"/>
</dbReference>
<dbReference type="HPA" id="ENSG00000124614">
    <property type="expression patterns" value="Low tissue specificity"/>
</dbReference>
<dbReference type="MalaCards" id="RPS10"/>
<dbReference type="MIM" id="603632">
    <property type="type" value="gene"/>
</dbReference>
<dbReference type="MIM" id="613308">
    <property type="type" value="phenotype"/>
</dbReference>
<dbReference type="neXtProt" id="NX_P46783"/>
<dbReference type="OpenTargets" id="ENSG00000124614"/>
<dbReference type="Orphanet" id="124">
    <property type="disease" value="Diamond-Blackfan anemia"/>
</dbReference>
<dbReference type="PharmGKB" id="PA34779"/>
<dbReference type="VEuPathDB" id="HostDB:ENSG00000124614"/>
<dbReference type="eggNOG" id="KOG3344">
    <property type="taxonomic scope" value="Eukaryota"/>
</dbReference>
<dbReference type="GeneTree" id="ENSGT00440000034918"/>
<dbReference type="HOGENOM" id="CLU_089349_3_1_1"/>
<dbReference type="InParanoid" id="P46783"/>
<dbReference type="OMA" id="YRRRDQE"/>
<dbReference type="OrthoDB" id="9522393at2759"/>
<dbReference type="PAN-GO" id="P46783">
    <property type="GO annotations" value="3 GO annotations based on evolutionary models"/>
</dbReference>
<dbReference type="PhylomeDB" id="P46783"/>
<dbReference type="TreeFam" id="TF319100"/>
<dbReference type="PathwayCommons" id="P46783"/>
<dbReference type="Reactome" id="R-HSA-156827">
    <property type="pathway name" value="L13a-mediated translational silencing of Ceruloplasmin expression"/>
</dbReference>
<dbReference type="Reactome" id="R-HSA-156902">
    <property type="pathway name" value="Peptide chain elongation"/>
</dbReference>
<dbReference type="Reactome" id="R-HSA-1799339">
    <property type="pathway name" value="SRP-dependent cotranslational protein targeting to membrane"/>
</dbReference>
<dbReference type="Reactome" id="R-HSA-192823">
    <property type="pathway name" value="Viral mRNA Translation"/>
</dbReference>
<dbReference type="Reactome" id="R-HSA-2408557">
    <property type="pathway name" value="Selenocysteine synthesis"/>
</dbReference>
<dbReference type="Reactome" id="R-HSA-6791226">
    <property type="pathway name" value="Major pathway of rRNA processing in the nucleolus and cytosol"/>
</dbReference>
<dbReference type="Reactome" id="R-HSA-72649">
    <property type="pathway name" value="Translation initiation complex formation"/>
</dbReference>
<dbReference type="Reactome" id="R-HSA-72689">
    <property type="pathway name" value="Formation of a pool of free 40S subunits"/>
</dbReference>
<dbReference type="Reactome" id="R-HSA-72695">
    <property type="pathway name" value="Formation of the ternary complex, and subsequently, the 43S complex"/>
</dbReference>
<dbReference type="Reactome" id="R-HSA-72702">
    <property type="pathway name" value="Ribosomal scanning and start codon recognition"/>
</dbReference>
<dbReference type="Reactome" id="R-HSA-72706">
    <property type="pathway name" value="GTP hydrolysis and joining of the 60S ribosomal subunit"/>
</dbReference>
<dbReference type="Reactome" id="R-HSA-72764">
    <property type="pathway name" value="Eukaryotic Translation Termination"/>
</dbReference>
<dbReference type="Reactome" id="R-HSA-9010553">
    <property type="pathway name" value="Regulation of expression of SLITs and ROBOs"/>
</dbReference>
<dbReference type="Reactome" id="R-HSA-9633012">
    <property type="pathway name" value="Response of EIF2AK4 (GCN2) to amino acid deficiency"/>
</dbReference>
<dbReference type="Reactome" id="R-HSA-9735869">
    <property type="pathway name" value="SARS-CoV-1 modulates host translation machinery"/>
</dbReference>
<dbReference type="Reactome" id="R-HSA-9754678">
    <property type="pathway name" value="SARS-CoV-2 modulates host translation machinery"/>
</dbReference>
<dbReference type="Reactome" id="R-HSA-975956">
    <property type="pathway name" value="Nonsense Mediated Decay (NMD) independent of the Exon Junction Complex (EJC)"/>
</dbReference>
<dbReference type="Reactome" id="R-HSA-975957">
    <property type="pathway name" value="Nonsense Mediated Decay (NMD) enhanced by the Exon Junction Complex (EJC)"/>
</dbReference>
<dbReference type="SignaLink" id="P46783"/>
<dbReference type="SIGNOR" id="P46783"/>
<dbReference type="BioGRID-ORCS" id="6204">
    <property type="hits" value="426 hits in 1154 CRISPR screens"/>
</dbReference>
<dbReference type="CD-CODE" id="91857CE7">
    <property type="entry name" value="Nucleolus"/>
</dbReference>
<dbReference type="EvolutionaryTrace" id="P46783"/>
<dbReference type="GeneWiki" id="RPS10"/>
<dbReference type="GenomeRNAi" id="6204"/>
<dbReference type="Pharos" id="P46783">
    <property type="development level" value="Tbio"/>
</dbReference>
<dbReference type="PRO" id="PR:P46783"/>
<dbReference type="Proteomes" id="UP000005640">
    <property type="component" value="Chromosome 6"/>
</dbReference>
<dbReference type="RNAct" id="P46783">
    <property type="molecule type" value="protein"/>
</dbReference>
<dbReference type="Bgee" id="ENSG00000124614">
    <property type="expression patterns" value="Expressed in primordial germ cell in gonad and 95 other cell types or tissues"/>
</dbReference>
<dbReference type="ExpressionAtlas" id="P46783">
    <property type="expression patterns" value="baseline and differential"/>
</dbReference>
<dbReference type="GO" id="GO:0005737">
    <property type="term" value="C:cytoplasm"/>
    <property type="evidence" value="ECO:0000303"/>
    <property type="project" value="ComplexPortal"/>
</dbReference>
<dbReference type="GO" id="GO:0005829">
    <property type="term" value="C:cytosol"/>
    <property type="evidence" value="ECO:0000314"/>
    <property type="project" value="HPA"/>
</dbReference>
<dbReference type="GO" id="GO:0022626">
    <property type="term" value="C:cytosolic ribosome"/>
    <property type="evidence" value="ECO:0000314"/>
    <property type="project" value="FlyBase"/>
</dbReference>
<dbReference type="GO" id="GO:0022627">
    <property type="term" value="C:cytosolic small ribosomal subunit"/>
    <property type="evidence" value="ECO:0000314"/>
    <property type="project" value="UniProtKB"/>
</dbReference>
<dbReference type="GO" id="GO:0005925">
    <property type="term" value="C:focal adhesion"/>
    <property type="evidence" value="ECO:0007005"/>
    <property type="project" value="UniProtKB"/>
</dbReference>
<dbReference type="GO" id="GO:0016020">
    <property type="term" value="C:membrane"/>
    <property type="evidence" value="ECO:0007005"/>
    <property type="project" value="UniProtKB"/>
</dbReference>
<dbReference type="GO" id="GO:0005730">
    <property type="term" value="C:nucleolus"/>
    <property type="evidence" value="ECO:0000314"/>
    <property type="project" value="UniProtKB"/>
</dbReference>
<dbReference type="GO" id="GO:0005654">
    <property type="term" value="C:nucleoplasm"/>
    <property type="evidence" value="ECO:0000304"/>
    <property type="project" value="Reactome"/>
</dbReference>
<dbReference type="GO" id="GO:0005840">
    <property type="term" value="C:ribosome"/>
    <property type="evidence" value="ECO:0000303"/>
    <property type="project" value="UniProtKB"/>
</dbReference>
<dbReference type="GO" id="GO:0045202">
    <property type="term" value="C:synapse"/>
    <property type="evidence" value="ECO:0007669"/>
    <property type="project" value="Ensembl"/>
</dbReference>
<dbReference type="GO" id="GO:0003723">
    <property type="term" value="F:RNA binding"/>
    <property type="evidence" value="ECO:0007005"/>
    <property type="project" value="UniProtKB"/>
</dbReference>
<dbReference type="GO" id="GO:0003735">
    <property type="term" value="F:structural constituent of ribosome"/>
    <property type="evidence" value="ECO:0000314"/>
    <property type="project" value="FlyBase"/>
</dbReference>
<dbReference type="GO" id="GO:0002181">
    <property type="term" value="P:cytoplasmic translation"/>
    <property type="evidence" value="ECO:0000303"/>
    <property type="project" value="ComplexPortal"/>
</dbReference>
<dbReference type="GO" id="GO:0006412">
    <property type="term" value="P:translation"/>
    <property type="evidence" value="ECO:0000305"/>
    <property type="project" value="UniProtKB"/>
</dbReference>
<dbReference type="FunFam" id="1.10.10.10:FF:001335">
    <property type="entry name" value="40S ribosomal protein S10"/>
    <property type="match status" value="1"/>
</dbReference>
<dbReference type="Gene3D" id="1.10.10.10">
    <property type="entry name" value="Winged helix-like DNA-binding domain superfamily/Winged helix DNA-binding domain"/>
    <property type="match status" value="1"/>
</dbReference>
<dbReference type="InterPro" id="IPR005326">
    <property type="entry name" value="Plectin_eS10_N"/>
</dbReference>
<dbReference type="InterPro" id="IPR037447">
    <property type="entry name" value="Ribosomal_eS10"/>
</dbReference>
<dbReference type="InterPro" id="IPR036388">
    <property type="entry name" value="WH-like_DNA-bd_sf"/>
</dbReference>
<dbReference type="PANTHER" id="PTHR12146">
    <property type="entry name" value="40S RIBOSOMAL PROTEIN S10"/>
    <property type="match status" value="1"/>
</dbReference>
<dbReference type="PANTHER" id="PTHR12146:SF10">
    <property type="entry name" value="SMALL RIBOSOMAL SUBUNIT PROTEIN ES10"/>
    <property type="match status" value="1"/>
</dbReference>
<dbReference type="Pfam" id="PF03501">
    <property type="entry name" value="S10_plectin"/>
    <property type="match status" value="1"/>
</dbReference>
<evidence type="ECO:0000250" key="1">
    <source>
        <dbReference type="UniProtKB" id="P63325"/>
    </source>
</evidence>
<evidence type="ECO:0000256" key="2">
    <source>
        <dbReference type="SAM" id="MobiDB-lite"/>
    </source>
</evidence>
<evidence type="ECO:0000269" key="3">
    <source>
    </source>
</evidence>
<evidence type="ECO:0000269" key="4">
    <source>
    </source>
</evidence>
<evidence type="ECO:0000269" key="5">
    <source>
    </source>
</evidence>
<evidence type="ECO:0000269" key="6">
    <source>
    </source>
</evidence>
<evidence type="ECO:0000269" key="7">
    <source>
    </source>
</evidence>
<evidence type="ECO:0000269" key="8">
    <source>
    </source>
</evidence>
<evidence type="ECO:0000269" key="9">
    <source>
    </source>
</evidence>
<evidence type="ECO:0000269" key="10">
    <source>
    </source>
</evidence>
<evidence type="ECO:0000269" key="11">
    <source>
    </source>
</evidence>
<evidence type="ECO:0000269" key="12">
    <source>
    </source>
</evidence>
<evidence type="ECO:0000303" key="13">
    <source>
    </source>
</evidence>
<evidence type="ECO:0000305" key="14"/>
<evidence type="ECO:0007829" key="15">
    <source>
        <dbReference type="PDB" id="7R4X"/>
    </source>
</evidence>
<comment type="function">
    <text evidence="5">Component of the 40S ribosomal subunit (PubMed:23636399). The ribosome is a large ribonucleoprotein complex responsible for the synthesis of proteins in the cell (PubMed:23636399).</text>
</comment>
<comment type="subunit">
    <text evidence="4 5">Component of the small ribosomal subunit (PubMed:23636399). The methylated form interacts with NPM1 (PubMed:20159986).</text>
</comment>
<comment type="interaction">
    <interactant intactId="EBI-354442">
        <id>P46783</id>
    </interactant>
    <interactant intactId="EBI-354542">
        <id>P25398</id>
        <label>RPS12</label>
    </interactant>
    <organismsDiffer>false</organismsDiffer>
    <experiments>2</experiments>
</comment>
<comment type="interaction">
    <interactant intactId="EBI-354442">
        <id>P46783</id>
    </interactant>
    <interactant intactId="EBI-351193">
        <id>P23396</id>
        <label>RPS3</label>
    </interactant>
    <organismsDiffer>false</organismsDiffer>
    <experiments>3</experiments>
</comment>
<comment type="interaction">
    <interactant intactId="EBI-354442">
        <id>P46783</id>
    </interactant>
    <interactant intactId="EBI-1210580">
        <id>Q9H5H4</id>
        <label>ZNF768</label>
    </interactant>
    <organismsDiffer>false</organismsDiffer>
    <experiments>2</experiments>
</comment>
<comment type="subcellular location">
    <subcellularLocation>
        <location evidence="4 5">Cytoplasm</location>
    </subcellularLocation>
    <subcellularLocation>
        <location evidence="4">Nucleus</location>
        <location evidence="4">Nucleolus</location>
    </subcellularLocation>
    <text evidence="4">Localized in the granular component (GC) region of the nucleolus. Methylation is required for its localization in the GC region. Colocalizes with NPS1 in the GC region of the nucleolus.</text>
</comment>
<comment type="PTM">
    <text evidence="4">Methylated by PRMT5. Methylation is necessary for its interaction with NPS1, its localization in the granular component (GC) region of the nucleolus, for the proper assembly of ribosomes, protein synthesis and optimal cell proliferation.</text>
</comment>
<comment type="PTM">
    <text evidence="6 7 8 9 10 11 12">Monoubiquitinated by ZNF598 when a ribosome has stalled during translation of poly(A) sequences, leading to preclude synthesis of a long poly-lysine tail and initiate the ribosome quality control (RQC) pathway to degrade the potentially detrimental aberrant nascent polypeptide (PubMed:28065601, PubMed:28132843, PubMed:28685749, PubMed:32011234, PubMed:36302773). Deubiquitinated by OTUD3 and USP21, antagonizing ZNF598 activity (PubMed:32011234). Deubiquitinated by OTUD1, antagonizing ZNF598 activity and stimulating formation of polysomes: deubiquitination by OTUD1 promotes stability and translation of a subset mRNAs with a high abundance of rare codons can limit the translation rate (PubMed:36445135). Deubiquitinated by USP10 (PubMed:31981475).</text>
</comment>
<comment type="disease" evidence="3">
    <disease id="DI-02684">
        <name>Diamond-Blackfan anemia 9</name>
        <acronym>DBA9</acronym>
        <description>A form of Diamond-Blackfan anemia, a congenital non-regenerative hypoplastic anemia that usually presents early in infancy. Diamond-Blackfan anemia is characterized by a moderate to severe macrocytic anemia, erythroblastopenia, and an increased risk of malignancy. 30 to 40% of Diamond-Blackfan anemia patients present with short stature and congenital anomalies, the most frequent being craniofacial (Pierre-Robin syndrome and cleft palate), thumb and urogenital anomalies.</description>
        <dbReference type="MIM" id="613308"/>
    </disease>
    <text>The disease is caused by variants affecting the gene represented in this entry.</text>
</comment>
<comment type="similarity">
    <text evidence="14">Belongs to the eukaryotic ribosomal protein eS10 family.</text>
</comment>
<organism>
    <name type="scientific">Homo sapiens</name>
    <name type="common">Human</name>
    <dbReference type="NCBI Taxonomy" id="9606"/>
    <lineage>
        <taxon>Eukaryota</taxon>
        <taxon>Metazoa</taxon>
        <taxon>Chordata</taxon>
        <taxon>Craniata</taxon>
        <taxon>Vertebrata</taxon>
        <taxon>Euteleostomi</taxon>
        <taxon>Mammalia</taxon>
        <taxon>Eutheria</taxon>
        <taxon>Euarchontoglires</taxon>
        <taxon>Primates</taxon>
        <taxon>Haplorrhini</taxon>
        <taxon>Catarrhini</taxon>
        <taxon>Hominidae</taxon>
        <taxon>Homo</taxon>
    </lineage>
</organism>
<protein>
    <recommendedName>
        <fullName evidence="13">Small ribosomal subunit protein eS10</fullName>
    </recommendedName>
    <alternativeName>
        <fullName>40S ribosomal protein S10</fullName>
    </alternativeName>
</protein>
<gene>
    <name type="primary">RPS10</name>
</gene>